<keyword id="KW-0010">Activator</keyword>
<keyword id="KW-0238">DNA-binding</keyword>
<keyword id="KW-0496">Mitochondrion</keyword>
<keyword id="KW-1135">Mitochondrion nucleoid</keyword>
<keyword id="KW-0597">Phosphoprotein</keyword>
<keyword id="KW-1185">Reference proteome</keyword>
<keyword id="KW-0677">Repeat</keyword>
<keyword id="KW-0804">Transcription</keyword>
<keyword id="KW-0805">Transcription regulation</keyword>
<keyword id="KW-0809">Transit peptide</keyword>
<name>TFAM_PIG</name>
<reference key="1">
    <citation type="submission" date="2005-02" db="EMBL/GenBank/DDBJ databases">
        <title>The porcine mitochondrial transcription factor A (TFAM) gene: sequencing, mapping and genetic diversity among 12 pig breeds.</title>
        <authorList>
            <person name="Kunej T."/>
            <person name="Wu X.-L."/>
            <person name="Milosevic Berlic T."/>
            <person name="Michal J.J."/>
            <person name="Jiang Z."/>
            <person name="Dovc P."/>
        </authorList>
    </citation>
    <scope>NUCLEOTIDE SEQUENCE [MRNA]</scope>
</reference>
<organism>
    <name type="scientific">Sus scrofa</name>
    <name type="common">Pig</name>
    <dbReference type="NCBI Taxonomy" id="9823"/>
    <lineage>
        <taxon>Eukaryota</taxon>
        <taxon>Metazoa</taxon>
        <taxon>Chordata</taxon>
        <taxon>Craniata</taxon>
        <taxon>Vertebrata</taxon>
        <taxon>Euteleostomi</taxon>
        <taxon>Mammalia</taxon>
        <taxon>Eutheria</taxon>
        <taxon>Laurasiatheria</taxon>
        <taxon>Artiodactyla</taxon>
        <taxon>Suina</taxon>
        <taxon>Suidae</taxon>
        <taxon>Sus</taxon>
    </lineage>
</organism>
<proteinExistence type="evidence at transcript level"/>
<gene>
    <name evidence="2" type="primary">TFAM</name>
</gene>
<feature type="transit peptide" description="Mitochondrion" evidence="3">
    <location>
        <begin position="1"/>
        <end position="42"/>
    </location>
</feature>
<feature type="chain" id="PRO_0000270512" description="Transcription factor A, mitochondrial">
    <location>
        <begin position="43"/>
        <end position="246"/>
    </location>
</feature>
<feature type="DNA-binding region" description="HMG box 1" evidence="4">
    <location>
        <begin position="50"/>
        <end position="118"/>
    </location>
</feature>
<feature type="DNA-binding region" description="HMG box 2" evidence="4">
    <location>
        <begin position="155"/>
        <end position="219"/>
    </location>
</feature>
<feature type="site" description="Intercalates between bases and promotes DNA bending" evidence="1">
    <location>
        <position position="58"/>
    </location>
</feature>
<feature type="site" description="Intercalates between bases and promotes DNA bending" evidence="1">
    <location>
        <position position="182"/>
    </location>
</feature>
<feature type="modified residue" description="Phosphoserine; by PKA" evidence="2">
    <location>
        <position position="56"/>
    </location>
</feature>
<feature type="modified residue" description="Phosphoserine; by PKA" evidence="2">
    <location>
        <position position="61"/>
    </location>
</feature>
<feature type="modified residue" description="Phosphothreonine" evidence="2">
    <location>
        <position position="122"/>
    </location>
</feature>
<feature type="modified residue" description="Phosphoserine; by PKA" evidence="2">
    <location>
        <position position="160"/>
    </location>
</feature>
<feature type="modified residue" description="Phosphoserine" evidence="2">
    <location>
        <position position="193"/>
    </location>
</feature>
<feature type="modified residue" description="Phosphoserine" evidence="2">
    <location>
        <position position="195"/>
    </location>
</feature>
<dbReference type="EMBL" id="AY923074">
    <property type="protein sequence ID" value="AAX18878.1"/>
    <property type="molecule type" value="mRNA"/>
</dbReference>
<dbReference type="RefSeq" id="NP_001123683.1">
    <property type="nucleotide sequence ID" value="NM_001130211.1"/>
</dbReference>
<dbReference type="RefSeq" id="XP_013845911.1">
    <property type="nucleotide sequence ID" value="XM_013990457.1"/>
</dbReference>
<dbReference type="SMR" id="Q5D144"/>
<dbReference type="FunCoup" id="Q5D144">
    <property type="interactions" value="2499"/>
</dbReference>
<dbReference type="STRING" id="9823.ENSSSCP00000042490"/>
<dbReference type="PaxDb" id="9823-ENSSSCP00000019961"/>
<dbReference type="PeptideAtlas" id="Q5D144"/>
<dbReference type="Ensembl" id="ENSSSCT00000046982.2">
    <property type="protein sequence ID" value="ENSSSCP00000042490.1"/>
    <property type="gene ID" value="ENSSSCG00000040185.3"/>
</dbReference>
<dbReference type="Ensembl" id="ENSSSCT00025095928.1">
    <property type="protein sequence ID" value="ENSSSCP00025042122.1"/>
    <property type="gene ID" value="ENSSSCG00025069797.1"/>
</dbReference>
<dbReference type="Ensembl" id="ENSSSCT00030040451.1">
    <property type="protein sequence ID" value="ENSSSCP00030018521.1"/>
    <property type="gene ID" value="ENSSSCG00030028998.1"/>
</dbReference>
<dbReference type="Ensembl" id="ENSSSCT00035065029.1">
    <property type="protein sequence ID" value="ENSSSCP00035026320.1"/>
    <property type="gene ID" value="ENSSSCG00035048817.1"/>
</dbReference>
<dbReference type="Ensembl" id="ENSSSCT00040084039.1">
    <property type="protein sequence ID" value="ENSSSCP00040036627.1"/>
    <property type="gene ID" value="ENSSSCG00040061715.1"/>
</dbReference>
<dbReference type="Ensembl" id="ENSSSCT00045022675.1">
    <property type="protein sequence ID" value="ENSSSCP00045015636.1"/>
    <property type="gene ID" value="ENSSSCG00045013293.1"/>
</dbReference>
<dbReference type="Ensembl" id="ENSSSCT00050075064.1">
    <property type="protein sequence ID" value="ENSSSCP00050032387.1"/>
    <property type="gene ID" value="ENSSSCG00050055011.1"/>
</dbReference>
<dbReference type="Ensembl" id="ENSSSCT00055023143.1">
    <property type="protein sequence ID" value="ENSSSCP00055018304.1"/>
    <property type="gene ID" value="ENSSSCG00055011815.1"/>
</dbReference>
<dbReference type="Ensembl" id="ENSSSCT00060028401.1">
    <property type="protein sequence ID" value="ENSSSCP00060012166.1"/>
    <property type="gene ID" value="ENSSSCG00060020953.1"/>
</dbReference>
<dbReference type="Ensembl" id="ENSSSCT00065008738.1">
    <property type="protein sequence ID" value="ENSSSCP00065003689.1"/>
    <property type="gene ID" value="ENSSSCG00065006459.1"/>
</dbReference>
<dbReference type="Ensembl" id="ENSSSCT00070045780.1">
    <property type="protein sequence ID" value="ENSSSCP00070038583.1"/>
    <property type="gene ID" value="ENSSSCG00070023001.1"/>
</dbReference>
<dbReference type="Ensembl" id="ENSSSCT00110015525">
    <property type="protein sequence ID" value="ENSSSCP00110010806"/>
    <property type="gene ID" value="ENSSSCG00110007985"/>
</dbReference>
<dbReference type="Ensembl" id="ENSSSCT00115028747">
    <property type="protein sequence ID" value="ENSSSCP00115027274"/>
    <property type="gene ID" value="ENSSSCG00115016395"/>
</dbReference>
<dbReference type="Ensembl" id="ENSSSCT00130006811">
    <property type="protein sequence ID" value="ENSSSCP00130004534"/>
    <property type="gene ID" value="ENSSSCG00130003665"/>
</dbReference>
<dbReference type="GeneID" id="397279"/>
<dbReference type="KEGG" id="ssc:397279"/>
<dbReference type="CTD" id="7019"/>
<dbReference type="VGNC" id="VGNC:109416">
    <property type="gene designation" value="TFAM"/>
</dbReference>
<dbReference type="eggNOG" id="KOG0381">
    <property type="taxonomic scope" value="Eukaryota"/>
</dbReference>
<dbReference type="GeneTree" id="ENSGT00440000039001"/>
<dbReference type="HOGENOM" id="CLU_2800755_0_0_1"/>
<dbReference type="InParanoid" id="Q5D144"/>
<dbReference type="OMA" id="YMQLAED"/>
<dbReference type="OrthoDB" id="5550281at2759"/>
<dbReference type="Reactome" id="R-SSC-163282">
    <property type="pathway name" value="Mitochondrial transcription initiation"/>
</dbReference>
<dbReference type="Reactome" id="R-SSC-9837999">
    <property type="pathway name" value="Mitochondrial protein degradation"/>
</dbReference>
<dbReference type="Proteomes" id="UP000008227">
    <property type="component" value="Chromosome 14"/>
</dbReference>
<dbReference type="Proteomes" id="UP000314985">
    <property type="component" value="Chromosome 14"/>
</dbReference>
<dbReference type="Proteomes" id="UP000694570">
    <property type="component" value="Unplaced"/>
</dbReference>
<dbReference type="Proteomes" id="UP000694571">
    <property type="component" value="Unplaced"/>
</dbReference>
<dbReference type="Proteomes" id="UP000694720">
    <property type="component" value="Unplaced"/>
</dbReference>
<dbReference type="Proteomes" id="UP000694722">
    <property type="component" value="Unplaced"/>
</dbReference>
<dbReference type="Proteomes" id="UP000694723">
    <property type="component" value="Unplaced"/>
</dbReference>
<dbReference type="Proteomes" id="UP000694724">
    <property type="component" value="Unplaced"/>
</dbReference>
<dbReference type="Proteomes" id="UP000694725">
    <property type="component" value="Unplaced"/>
</dbReference>
<dbReference type="Proteomes" id="UP000694726">
    <property type="component" value="Unplaced"/>
</dbReference>
<dbReference type="Proteomes" id="UP000694727">
    <property type="component" value="Unplaced"/>
</dbReference>
<dbReference type="Proteomes" id="UP000694728">
    <property type="component" value="Unplaced"/>
</dbReference>
<dbReference type="Bgee" id="ENSSSCG00000040185">
    <property type="expression patterns" value="Expressed in testis and 44 other cell types or tissues"/>
</dbReference>
<dbReference type="ExpressionAtlas" id="Q5D144">
    <property type="expression patterns" value="baseline and differential"/>
</dbReference>
<dbReference type="GO" id="GO:0042645">
    <property type="term" value="C:mitochondrial nucleoid"/>
    <property type="evidence" value="ECO:0000250"/>
    <property type="project" value="UniProtKB"/>
</dbReference>
<dbReference type="GO" id="GO:0032991">
    <property type="term" value="C:protein-containing complex"/>
    <property type="evidence" value="ECO:0007669"/>
    <property type="project" value="Ensembl"/>
</dbReference>
<dbReference type="GO" id="GO:0003682">
    <property type="term" value="F:chromatin binding"/>
    <property type="evidence" value="ECO:0000250"/>
    <property type="project" value="UniProtKB"/>
</dbReference>
<dbReference type="GO" id="GO:0008301">
    <property type="term" value="F:DNA binding, bending"/>
    <property type="evidence" value="ECO:0000318"/>
    <property type="project" value="GO_Central"/>
</dbReference>
<dbReference type="GO" id="GO:0001018">
    <property type="term" value="F:mitochondrial promoter sequence-specific DNA binding"/>
    <property type="evidence" value="ECO:0000250"/>
    <property type="project" value="UniProtKB"/>
</dbReference>
<dbReference type="GO" id="GO:0034246">
    <property type="term" value="F:mitochondrial transcription factor activity"/>
    <property type="evidence" value="ECO:0000250"/>
    <property type="project" value="UniProtKB"/>
</dbReference>
<dbReference type="GO" id="GO:0000976">
    <property type="term" value="F:transcription cis-regulatory region binding"/>
    <property type="evidence" value="ECO:0000318"/>
    <property type="project" value="GO_Central"/>
</dbReference>
<dbReference type="GO" id="GO:0006390">
    <property type="term" value="P:mitochondrial transcription"/>
    <property type="evidence" value="ECO:0000250"/>
    <property type="project" value="UniProtKB"/>
</dbReference>
<dbReference type="GO" id="GO:0045893">
    <property type="term" value="P:positive regulation of DNA-templated transcription"/>
    <property type="evidence" value="ECO:0000250"/>
    <property type="project" value="UniProtKB"/>
</dbReference>
<dbReference type="GO" id="GO:0006357">
    <property type="term" value="P:regulation of transcription by RNA polymerase II"/>
    <property type="evidence" value="ECO:0000318"/>
    <property type="project" value="GO_Central"/>
</dbReference>
<dbReference type="GO" id="GO:0006391">
    <property type="term" value="P:transcription initiation at mitochondrial promoter"/>
    <property type="evidence" value="ECO:0000250"/>
    <property type="project" value="UniProtKB"/>
</dbReference>
<dbReference type="CDD" id="cd21986">
    <property type="entry name" value="HMG-box_TFAM_rpt1"/>
    <property type="match status" value="1"/>
</dbReference>
<dbReference type="CDD" id="cd21987">
    <property type="entry name" value="HMG-box_TFAM_rpt2"/>
    <property type="match status" value="1"/>
</dbReference>
<dbReference type="FunFam" id="1.10.30.10:FF:000043">
    <property type="entry name" value="Transcription factor A, mitochondrial"/>
    <property type="match status" value="1"/>
</dbReference>
<dbReference type="FunFam" id="1.10.30.10:FF:000045">
    <property type="entry name" value="Transcription factor A, mitochondrial"/>
    <property type="match status" value="1"/>
</dbReference>
<dbReference type="Gene3D" id="1.10.30.10">
    <property type="entry name" value="High mobility group box domain"/>
    <property type="match status" value="2"/>
</dbReference>
<dbReference type="InterPro" id="IPR009071">
    <property type="entry name" value="HMG_box_dom"/>
</dbReference>
<dbReference type="InterPro" id="IPR036910">
    <property type="entry name" value="HMG_box_dom_sf"/>
</dbReference>
<dbReference type="InterPro" id="IPR050342">
    <property type="entry name" value="HMGB"/>
</dbReference>
<dbReference type="PANTHER" id="PTHR48112">
    <property type="entry name" value="HIGH MOBILITY GROUP PROTEIN DSP1"/>
    <property type="match status" value="1"/>
</dbReference>
<dbReference type="PANTHER" id="PTHR48112:SF36">
    <property type="entry name" value="TRANSCRIPTION FACTOR A, MITOCHONDRIAL"/>
    <property type="match status" value="1"/>
</dbReference>
<dbReference type="Pfam" id="PF00505">
    <property type="entry name" value="HMG_box"/>
    <property type="match status" value="1"/>
</dbReference>
<dbReference type="Pfam" id="PF09011">
    <property type="entry name" value="HMG_box_2"/>
    <property type="match status" value="1"/>
</dbReference>
<dbReference type="SMART" id="SM00398">
    <property type="entry name" value="HMG"/>
    <property type="match status" value="2"/>
</dbReference>
<dbReference type="SUPFAM" id="SSF47095">
    <property type="entry name" value="HMG-box"/>
    <property type="match status" value="2"/>
</dbReference>
<dbReference type="PROSITE" id="PS50118">
    <property type="entry name" value="HMG_BOX_2"/>
    <property type="match status" value="2"/>
</dbReference>
<comment type="function">
    <text evidence="2">Binds to the mitochondrial light strand promoter and functions in mitochondrial transcription regulation. Component of the mitochondrial transcription initiation complex, composed at least of TFB2M, TFAM and POLRMT that is required for basal transcription of mitochondrial DNA. In this complex, TFAM recruits POLRMT to a specific promoter whereas TFB2M induces structural changes in POLRMT to enable promoter opening and trapping of the DNA non-template strand. Required for accurate and efficient promoter recognition by the mitochondrial RNA polymerase. Promotes transcription initiation from the HSP1 and the light strand promoter by binding immediately upstream of transcriptional start sites. Is able to unwind DNA. Bends the mitochondrial light strand promoter DNA into a U-turn shape via its HMG boxes. Required for maintenance of normal levels of mitochondrial DNA. May play a role in organizing and compacting mitochondrial DNA.</text>
</comment>
<comment type="subunit">
    <text evidence="2">Monomer; binds DNA as a monomer. Homodimer. Component of the mitochondrial transcription initiation complex, composed at least of TFB2M, TFAM and POLRMT. In this complex TFAM recruits POLRMT to the promoter whereas TFB2M induces structural changes in POLRMT to enable promoter opening and trapping of the DNA non-template strand. Upon metabolic stress, forms a complex composed of FOXO3, SIRT3, TFAM and POLRMT. Interacts with TFB1M and TFB2M. Interacts with CLPX; this enhances DNA-binding.</text>
</comment>
<comment type="subcellular location">
    <subcellularLocation>
        <location evidence="1">Mitochondrion</location>
    </subcellularLocation>
    <subcellularLocation>
        <location evidence="1">Mitochondrion matrix</location>
        <location evidence="1">Mitochondrion nucleoid</location>
    </subcellularLocation>
</comment>
<comment type="domain">
    <text evidence="1">Binds DNA via its HMG boxes. When bound to the mitochondrial light strand promoter, bends DNA into a U-turn shape, each HMG box bending the DNA by 90 degrees (By similarity).</text>
</comment>
<comment type="PTM">
    <text evidence="1">Phosphorylation by PKA within the HMG box 1 impairs DNA binding and promotes degradation by the AAA+ Lon protease.</text>
</comment>
<sequence length="246" mass="28726">MALLRGVWGVLSALGKSGADLCAVCGSRLRSPFSFAYVPRWFSSTLSGFPKKPMTSYVRFSKEQLPIFKAQNPDAKNSELIKKIAELWRELPDSEKKIYEDAYRADWQVYKEEVNRIQEQLTPSQMVSLEKEIMQKRLKKKALIKKRELTMLGKPKRPRSAYNIFIAERFQEAKDGPSQVKLKTINENWKNLSSSQKQVYIQLAEDDKVRYYNEMKSWEEQMVEVGRNDLIRRSMKHSAKKDTEEC</sequence>
<protein>
    <recommendedName>
        <fullName evidence="2">Transcription factor A, mitochondrial</fullName>
        <shortName>mtTFA</shortName>
    </recommendedName>
</protein>
<evidence type="ECO:0000250" key="1"/>
<evidence type="ECO:0000250" key="2">
    <source>
        <dbReference type="UniProtKB" id="Q00059"/>
    </source>
</evidence>
<evidence type="ECO:0000255" key="3"/>
<evidence type="ECO:0000255" key="4">
    <source>
        <dbReference type="PROSITE-ProRule" id="PRU00267"/>
    </source>
</evidence>
<accession>Q5D144</accession>